<protein>
    <recommendedName>
        <fullName evidence="1">Bifunctional purine biosynthesis protein PurH</fullName>
    </recommendedName>
    <domain>
        <recommendedName>
            <fullName evidence="1">Phosphoribosylaminoimidazolecarboxamide formyltransferase</fullName>
            <ecNumber evidence="1">2.1.2.3</ecNumber>
        </recommendedName>
        <alternativeName>
            <fullName evidence="1">AICAR transformylase</fullName>
        </alternativeName>
    </domain>
    <domain>
        <recommendedName>
            <fullName evidence="1">IMP cyclohydrolase</fullName>
            <ecNumber evidence="1">3.5.4.10</ecNumber>
        </recommendedName>
        <alternativeName>
            <fullName evidence="1">ATIC</fullName>
        </alternativeName>
        <alternativeName>
            <fullName evidence="1">IMP synthase</fullName>
        </alternativeName>
        <alternativeName>
            <fullName evidence="1">Inosinicase</fullName>
        </alternativeName>
    </domain>
</protein>
<evidence type="ECO:0000255" key="1">
    <source>
        <dbReference type="HAMAP-Rule" id="MF_00139"/>
    </source>
</evidence>
<evidence type="ECO:0000255" key="2">
    <source>
        <dbReference type="PROSITE-ProRule" id="PRU01202"/>
    </source>
</evidence>
<reference key="1">
    <citation type="journal article" date="2008" name="PLoS ONE">
        <title>A recalibrated molecular clock and independent origins for the cholera pandemic clones.</title>
        <authorList>
            <person name="Feng L."/>
            <person name="Reeves P.R."/>
            <person name="Lan R."/>
            <person name="Ren Y."/>
            <person name="Gao C."/>
            <person name="Zhou Z."/>
            <person name="Ren Y."/>
            <person name="Cheng J."/>
            <person name="Wang W."/>
            <person name="Wang J."/>
            <person name="Qian W."/>
            <person name="Li D."/>
            <person name="Wang L."/>
        </authorList>
    </citation>
    <scope>NUCLEOTIDE SEQUENCE [LARGE SCALE GENOMIC DNA]</scope>
    <source>
        <strain>M66-2</strain>
    </source>
</reference>
<feature type="chain" id="PRO_1000122979" description="Bifunctional purine biosynthesis protein PurH">
    <location>
        <begin position="1"/>
        <end position="530"/>
    </location>
</feature>
<feature type="domain" description="MGS-like" evidence="2">
    <location>
        <begin position="1"/>
        <end position="148"/>
    </location>
</feature>
<proteinExistence type="inferred from homology"/>
<keyword id="KW-0378">Hydrolase</keyword>
<keyword id="KW-0511">Multifunctional enzyme</keyword>
<keyword id="KW-0658">Purine biosynthesis</keyword>
<keyword id="KW-0808">Transferase</keyword>
<organism>
    <name type="scientific">Vibrio cholerae serotype O1 (strain M66-2)</name>
    <dbReference type="NCBI Taxonomy" id="579112"/>
    <lineage>
        <taxon>Bacteria</taxon>
        <taxon>Pseudomonadati</taxon>
        <taxon>Pseudomonadota</taxon>
        <taxon>Gammaproteobacteria</taxon>
        <taxon>Vibrionales</taxon>
        <taxon>Vibrionaceae</taxon>
        <taxon>Vibrio</taxon>
    </lineage>
</organism>
<dbReference type="EC" id="2.1.2.3" evidence="1"/>
<dbReference type="EC" id="3.5.4.10" evidence="1"/>
<dbReference type="EMBL" id="CP001233">
    <property type="protein sequence ID" value="ACP04590.1"/>
    <property type="molecule type" value="Genomic_DNA"/>
</dbReference>
<dbReference type="RefSeq" id="WP_001057885.1">
    <property type="nucleotide sequence ID" value="NC_012578.1"/>
</dbReference>
<dbReference type="SMR" id="C3LQN2"/>
<dbReference type="KEGG" id="vcm:VCM66_0261"/>
<dbReference type="HOGENOM" id="CLU_016316_5_2_6"/>
<dbReference type="UniPathway" id="UPA00074">
    <property type="reaction ID" value="UER00133"/>
</dbReference>
<dbReference type="UniPathway" id="UPA00074">
    <property type="reaction ID" value="UER00135"/>
</dbReference>
<dbReference type="Proteomes" id="UP000001217">
    <property type="component" value="Chromosome I"/>
</dbReference>
<dbReference type="GO" id="GO:0005829">
    <property type="term" value="C:cytosol"/>
    <property type="evidence" value="ECO:0007669"/>
    <property type="project" value="TreeGrafter"/>
</dbReference>
<dbReference type="GO" id="GO:0003937">
    <property type="term" value="F:IMP cyclohydrolase activity"/>
    <property type="evidence" value="ECO:0007669"/>
    <property type="project" value="UniProtKB-UniRule"/>
</dbReference>
<dbReference type="GO" id="GO:0004643">
    <property type="term" value="F:phosphoribosylaminoimidazolecarboxamide formyltransferase activity"/>
    <property type="evidence" value="ECO:0007669"/>
    <property type="project" value="UniProtKB-UniRule"/>
</dbReference>
<dbReference type="GO" id="GO:0006189">
    <property type="term" value="P:'de novo' IMP biosynthetic process"/>
    <property type="evidence" value="ECO:0007669"/>
    <property type="project" value="UniProtKB-UniRule"/>
</dbReference>
<dbReference type="CDD" id="cd01421">
    <property type="entry name" value="IMPCH"/>
    <property type="match status" value="1"/>
</dbReference>
<dbReference type="FunFam" id="3.40.140.20:FF:000001">
    <property type="entry name" value="Bifunctional purine biosynthesis protein PurH"/>
    <property type="match status" value="1"/>
</dbReference>
<dbReference type="FunFam" id="3.40.140.20:FF:000002">
    <property type="entry name" value="Bifunctional purine biosynthesis protein PurH"/>
    <property type="match status" value="1"/>
</dbReference>
<dbReference type="FunFam" id="3.40.50.1380:FF:000001">
    <property type="entry name" value="Bifunctional purine biosynthesis protein PurH"/>
    <property type="match status" value="1"/>
</dbReference>
<dbReference type="Gene3D" id="3.40.140.20">
    <property type="match status" value="2"/>
</dbReference>
<dbReference type="Gene3D" id="3.40.50.1380">
    <property type="entry name" value="Methylglyoxal synthase-like domain"/>
    <property type="match status" value="1"/>
</dbReference>
<dbReference type="HAMAP" id="MF_00139">
    <property type="entry name" value="PurH"/>
    <property type="match status" value="1"/>
</dbReference>
<dbReference type="InterPro" id="IPR024051">
    <property type="entry name" value="AICAR_Tfase_dup_dom_sf"/>
</dbReference>
<dbReference type="InterPro" id="IPR016193">
    <property type="entry name" value="Cytidine_deaminase-like"/>
</dbReference>
<dbReference type="InterPro" id="IPR011607">
    <property type="entry name" value="MGS-like_dom"/>
</dbReference>
<dbReference type="InterPro" id="IPR036914">
    <property type="entry name" value="MGS-like_dom_sf"/>
</dbReference>
<dbReference type="InterPro" id="IPR002695">
    <property type="entry name" value="PurH-like"/>
</dbReference>
<dbReference type="NCBIfam" id="NF002049">
    <property type="entry name" value="PRK00881.1"/>
    <property type="match status" value="1"/>
</dbReference>
<dbReference type="NCBIfam" id="TIGR00355">
    <property type="entry name" value="purH"/>
    <property type="match status" value="1"/>
</dbReference>
<dbReference type="PANTHER" id="PTHR11692:SF0">
    <property type="entry name" value="BIFUNCTIONAL PURINE BIOSYNTHESIS PROTEIN ATIC"/>
    <property type="match status" value="1"/>
</dbReference>
<dbReference type="PANTHER" id="PTHR11692">
    <property type="entry name" value="BIFUNCTIONAL PURINE BIOSYNTHESIS PROTEIN PURH"/>
    <property type="match status" value="1"/>
</dbReference>
<dbReference type="Pfam" id="PF01808">
    <property type="entry name" value="AICARFT_IMPCHas"/>
    <property type="match status" value="1"/>
</dbReference>
<dbReference type="Pfam" id="PF02142">
    <property type="entry name" value="MGS"/>
    <property type="match status" value="1"/>
</dbReference>
<dbReference type="PIRSF" id="PIRSF000414">
    <property type="entry name" value="AICARFT_IMPCHas"/>
    <property type="match status" value="1"/>
</dbReference>
<dbReference type="SMART" id="SM00798">
    <property type="entry name" value="AICARFT_IMPCHas"/>
    <property type="match status" value="1"/>
</dbReference>
<dbReference type="SMART" id="SM00851">
    <property type="entry name" value="MGS"/>
    <property type="match status" value="1"/>
</dbReference>
<dbReference type="SUPFAM" id="SSF53927">
    <property type="entry name" value="Cytidine deaminase-like"/>
    <property type="match status" value="1"/>
</dbReference>
<dbReference type="SUPFAM" id="SSF52335">
    <property type="entry name" value="Methylglyoxal synthase-like"/>
    <property type="match status" value="1"/>
</dbReference>
<dbReference type="PROSITE" id="PS51855">
    <property type="entry name" value="MGS"/>
    <property type="match status" value="1"/>
</dbReference>
<accession>C3LQN2</accession>
<comment type="catalytic activity">
    <reaction evidence="1">
        <text>(6R)-10-formyltetrahydrofolate + 5-amino-1-(5-phospho-beta-D-ribosyl)imidazole-4-carboxamide = 5-formamido-1-(5-phospho-D-ribosyl)imidazole-4-carboxamide + (6S)-5,6,7,8-tetrahydrofolate</text>
        <dbReference type="Rhea" id="RHEA:22192"/>
        <dbReference type="ChEBI" id="CHEBI:57453"/>
        <dbReference type="ChEBI" id="CHEBI:58467"/>
        <dbReference type="ChEBI" id="CHEBI:58475"/>
        <dbReference type="ChEBI" id="CHEBI:195366"/>
        <dbReference type="EC" id="2.1.2.3"/>
    </reaction>
</comment>
<comment type="catalytic activity">
    <reaction evidence="1">
        <text>IMP + H2O = 5-formamido-1-(5-phospho-D-ribosyl)imidazole-4-carboxamide</text>
        <dbReference type="Rhea" id="RHEA:18445"/>
        <dbReference type="ChEBI" id="CHEBI:15377"/>
        <dbReference type="ChEBI" id="CHEBI:58053"/>
        <dbReference type="ChEBI" id="CHEBI:58467"/>
        <dbReference type="EC" id="3.5.4.10"/>
    </reaction>
</comment>
<comment type="pathway">
    <text evidence="1">Purine metabolism; IMP biosynthesis via de novo pathway; 5-formamido-1-(5-phospho-D-ribosyl)imidazole-4-carboxamide from 5-amino-1-(5-phospho-D-ribosyl)imidazole-4-carboxamide (10-formyl THF route): step 1/1.</text>
</comment>
<comment type="pathway">
    <text evidence="1">Purine metabolism; IMP biosynthesis via de novo pathway; IMP from 5-formamido-1-(5-phospho-D-ribosyl)imidazole-4-carboxamide: step 1/1.</text>
</comment>
<comment type="domain">
    <text evidence="1">The IMP cyclohydrolase activity resides in the N-terminal region.</text>
</comment>
<comment type="similarity">
    <text evidence="1">Belongs to the PurH family.</text>
</comment>
<name>PUR9_VIBCM</name>
<sequence>MNNARPIHRALLSVSDKTGIVEFAKALAERGVELLSTGGTARLLAEQGLTVTEVSDYTGFPEMMDGRVKTLHPKVHGGILGRRGQDDAVMNTHGIQPIDMVVVNLYPFAQTVANPNCTLADAVENIDIGGPTMVRSAAKNHKDVAIVVNAHDYDRVIREMDANHNSLTLATRFDLAIAAFEHTAAYDGMIANYFGTLVPSYGDNKEGDEESKFPRTFNAQFIKKQDMRYGENSHQAAAFYVEANPQEASVATARQIQGKALSYNNIADTDAALECVKEFSEPACVIVKHANPCGVALGDDLLQAYNRAYQTDPTSAFGGIIAFNRELDGETARAIIERQFVEVIIAPKVSQAAIDIVAAKQNVRLLECGEWQGQTTGFDLKRVNGGLLVQDRDQGMVAQDDLQVVSTRQPSDAELKDALFCWKVAKYVKSNAIVYAKGDMTIGIGAGQMSRVYSAKIAGIKAADEGLEVAGSVMASDAFFPFRDGIDAAAEAGITCVIQPGGSMRDQEVIDAANEHGMAMIFTGMRHFRH</sequence>
<gene>
    <name evidence="1" type="primary">purH</name>
    <name type="ordered locus">VCM66_0261</name>
</gene>